<sequence>MADGEDIQPLVCDNGTGMVKAGFAGDDAPRAVFPSIVGRPRHTGVMVGMGQKDAYVGDEAQSKRGILTLKYPIEHGIVSNWDDMEKIWHHTFYNELRVAPEEHPVLLTEAPLNPKANREKMTQIMFETFNTPAMYVAIQAVLSLYASGRTTGIVLDSGDGVSHTVPIYEGYALPHAILRLDLAGRDLTDYLMKILTERGYSFTTSAEREIVRDVKEKLAYIALDYEQEMETANTSSSVEKSYELPDGQVITIGGERFRCPEVLFQPSLVGMEAAGIHETTYNSIMKCDVDIRKDLYGNIVLSGGTTMFPGIADRMSKEITALAPSSMKIKVVAPPERKYSVWIGGSILASLSTFQQMWIAKAEYDESGPSIVHRKCF</sequence>
<feature type="initiator methionine" description="Removed" evidence="2">
    <location>
        <position position="1"/>
    </location>
</feature>
<feature type="chain" id="PRO_0000088895" description="Actin-11">
    <location>
        <begin position="2"/>
        <end position="377"/>
    </location>
</feature>
<feature type="modified residue" description="N-acetylalanine" evidence="2">
    <location>
        <position position="2"/>
    </location>
</feature>
<dbReference type="EC" id="3.6.4.-" evidence="1"/>
<dbReference type="EMBL" id="U27981">
    <property type="protein sequence ID" value="AAB39404.1"/>
    <property type="molecule type" value="Genomic_DNA"/>
</dbReference>
<dbReference type="EMBL" id="AC069473">
    <property type="protein sequence ID" value="AAG51045.1"/>
    <property type="molecule type" value="Genomic_DNA"/>
</dbReference>
<dbReference type="EMBL" id="AP002063">
    <property type="protein sequence ID" value="BAB01959.1"/>
    <property type="molecule type" value="Genomic_DNA"/>
</dbReference>
<dbReference type="EMBL" id="CP002686">
    <property type="protein sequence ID" value="AEE75151.1"/>
    <property type="molecule type" value="Genomic_DNA"/>
</dbReference>
<dbReference type="EMBL" id="BT005593">
    <property type="protein sequence ID" value="AAO64013.1"/>
    <property type="molecule type" value="mRNA"/>
</dbReference>
<dbReference type="EMBL" id="AY087740">
    <property type="protein sequence ID" value="AAM65277.1"/>
    <property type="molecule type" value="mRNA"/>
</dbReference>
<dbReference type="PIR" id="S68109">
    <property type="entry name" value="S68109"/>
</dbReference>
<dbReference type="RefSeq" id="NP_187818.1">
    <property type="nucleotide sequence ID" value="NM_112046.4"/>
</dbReference>
<dbReference type="SMR" id="P53496"/>
<dbReference type="BioGRID" id="5719">
    <property type="interactions" value="7"/>
</dbReference>
<dbReference type="FunCoup" id="P53496">
    <property type="interactions" value="1916"/>
</dbReference>
<dbReference type="IntAct" id="P53496">
    <property type="interactions" value="6"/>
</dbReference>
<dbReference type="STRING" id="3702.P53496"/>
<dbReference type="iPTMnet" id="P53496"/>
<dbReference type="MetOSite" id="P53496"/>
<dbReference type="PaxDb" id="3702-AT3G12110.1"/>
<dbReference type="ProteomicsDB" id="244672"/>
<dbReference type="EnsemblPlants" id="AT3G12110.1">
    <property type="protein sequence ID" value="AT3G12110.1"/>
    <property type="gene ID" value="AT3G12110"/>
</dbReference>
<dbReference type="GeneID" id="820385"/>
<dbReference type="Gramene" id="AT3G12110.1">
    <property type="protein sequence ID" value="AT3G12110.1"/>
    <property type="gene ID" value="AT3G12110"/>
</dbReference>
<dbReference type="KEGG" id="ath:AT3G12110"/>
<dbReference type="Araport" id="AT3G12110"/>
<dbReference type="TAIR" id="AT3G12110">
    <property type="gene designation" value="ACT11"/>
</dbReference>
<dbReference type="eggNOG" id="KOG0676">
    <property type="taxonomic scope" value="Eukaryota"/>
</dbReference>
<dbReference type="HOGENOM" id="CLU_027965_0_2_1"/>
<dbReference type="InParanoid" id="P53496"/>
<dbReference type="OMA" id="IICFISK"/>
<dbReference type="OrthoDB" id="2011723at2759"/>
<dbReference type="PhylomeDB" id="P53496"/>
<dbReference type="CD-CODE" id="4299E36E">
    <property type="entry name" value="Nucleolus"/>
</dbReference>
<dbReference type="PRO" id="PR:P53496"/>
<dbReference type="Proteomes" id="UP000006548">
    <property type="component" value="Chromosome 3"/>
</dbReference>
<dbReference type="ExpressionAtlas" id="P53496">
    <property type="expression patterns" value="baseline and differential"/>
</dbReference>
<dbReference type="GO" id="GO:0009941">
    <property type="term" value="C:chloroplast envelope"/>
    <property type="evidence" value="ECO:0007005"/>
    <property type="project" value="TAIR"/>
</dbReference>
<dbReference type="GO" id="GO:0009570">
    <property type="term" value="C:chloroplast stroma"/>
    <property type="evidence" value="ECO:0007005"/>
    <property type="project" value="TAIR"/>
</dbReference>
<dbReference type="GO" id="GO:0005856">
    <property type="term" value="C:cytoskeleton"/>
    <property type="evidence" value="ECO:0000250"/>
    <property type="project" value="TAIR"/>
</dbReference>
<dbReference type="GO" id="GO:0005829">
    <property type="term" value="C:cytosol"/>
    <property type="evidence" value="ECO:0007005"/>
    <property type="project" value="TAIR"/>
</dbReference>
<dbReference type="GO" id="GO:0005739">
    <property type="term" value="C:mitochondrion"/>
    <property type="evidence" value="ECO:0007005"/>
    <property type="project" value="TAIR"/>
</dbReference>
<dbReference type="GO" id="GO:0009506">
    <property type="term" value="C:plasmodesma"/>
    <property type="evidence" value="ECO:0007005"/>
    <property type="project" value="TAIR"/>
</dbReference>
<dbReference type="GO" id="GO:0005524">
    <property type="term" value="F:ATP binding"/>
    <property type="evidence" value="ECO:0007669"/>
    <property type="project" value="UniProtKB-KW"/>
</dbReference>
<dbReference type="GO" id="GO:0016787">
    <property type="term" value="F:hydrolase activity"/>
    <property type="evidence" value="ECO:0007669"/>
    <property type="project" value="UniProtKB-KW"/>
</dbReference>
<dbReference type="GO" id="GO:0005200">
    <property type="term" value="F:structural constituent of cytoskeleton"/>
    <property type="evidence" value="ECO:0000250"/>
    <property type="project" value="TAIR"/>
</dbReference>
<dbReference type="CDD" id="cd10224">
    <property type="entry name" value="ASKHA_NBD_actin"/>
    <property type="match status" value="1"/>
</dbReference>
<dbReference type="FunFam" id="3.30.420.40:FF:000291">
    <property type="entry name" value="Actin, alpha skeletal muscle"/>
    <property type="match status" value="1"/>
</dbReference>
<dbReference type="FunFam" id="3.90.640.10:FF:000001">
    <property type="entry name" value="Actin, muscle"/>
    <property type="match status" value="1"/>
</dbReference>
<dbReference type="FunFam" id="3.30.420.40:FF:000404">
    <property type="entry name" value="Major actin"/>
    <property type="match status" value="1"/>
</dbReference>
<dbReference type="FunFam" id="3.30.420.40:FF:000058">
    <property type="entry name" value="Putative actin-related protein 5"/>
    <property type="match status" value="1"/>
</dbReference>
<dbReference type="Gene3D" id="3.30.420.40">
    <property type="match status" value="2"/>
</dbReference>
<dbReference type="Gene3D" id="3.90.640.10">
    <property type="entry name" value="Actin, Chain A, domain 4"/>
    <property type="match status" value="1"/>
</dbReference>
<dbReference type="InterPro" id="IPR004000">
    <property type="entry name" value="Actin"/>
</dbReference>
<dbReference type="InterPro" id="IPR020902">
    <property type="entry name" value="Actin/actin-like_CS"/>
</dbReference>
<dbReference type="InterPro" id="IPR004001">
    <property type="entry name" value="Actin_CS"/>
</dbReference>
<dbReference type="InterPro" id="IPR043129">
    <property type="entry name" value="ATPase_NBD"/>
</dbReference>
<dbReference type="PANTHER" id="PTHR11937">
    <property type="entry name" value="ACTIN"/>
    <property type="match status" value="1"/>
</dbReference>
<dbReference type="Pfam" id="PF00022">
    <property type="entry name" value="Actin"/>
    <property type="match status" value="1"/>
</dbReference>
<dbReference type="PRINTS" id="PR00190">
    <property type="entry name" value="ACTIN"/>
</dbReference>
<dbReference type="SMART" id="SM00268">
    <property type="entry name" value="ACTIN"/>
    <property type="match status" value="1"/>
</dbReference>
<dbReference type="SUPFAM" id="SSF53067">
    <property type="entry name" value="Actin-like ATPase domain"/>
    <property type="match status" value="2"/>
</dbReference>
<dbReference type="PROSITE" id="PS00406">
    <property type="entry name" value="ACTINS_1"/>
    <property type="match status" value="1"/>
</dbReference>
<dbReference type="PROSITE" id="PS00432">
    <property type="entry name" value="ACTINS_2"/>
    <property type="match status" value="1"/>
</dbReference>
<dbReference type="PROSITE" id="PS01132">
    <property type="entry name" value="ACTINS_ACT_LIKE"/>
    <property type="match status" value="1"/>
</dbReference>
<organism>
    <name type="scientific">Arabidopsis thaliana</name>
    <name type="common">Mouse-ear cress</name>
    <dbReference type="NCBI Taxonomy" id="3702"/>
    <lineage>
        <taxon>Eukaryota</taxon>
        <taxon>Viridiplantae</taxon>
        <taxon>Streptophyta</taxon>
        <taxon>Embryophyta</taxon>
        <taxon>Tracheophyta</taxon>
        <taxon>Spermatophyta</taxon>
        <taxon>Magnoliopsida</taxon>
        <taxon>eudicotyledons</taxon>
        <taxon>Gunneridae</taxon>
        <taxon>Pentapetalae</taxon>
        <taxon>rosids</taxon>
        <taxon>malvids</taxon>
        <taxon>Brassicales</taxon>
        <taxon>Brassicaceae</taxon>
        <taxon>Camelineae</taxon>
        <taxon>Arabidopsis</taxon>
    </lineage>
</organism>
<proteinExistence type="evidence at protein level"/>
<protein>
    <recommendedName>
        <fullName>Actin-11</fullName>
        <ecNumber evidence="1">3.6.4.-</ecNumber>
    </recommendedName>
</protein>
<comment type="function">
    <text>Actins are highly conserved proteins that are involved in various types of cell motility and are ubiquitously expressed in all eukaryotic cells. Essential component of cell cytoskeleton; plays an important role in cytoplasmic streaming, cell shape determination, cell division, organelle movement and extension growth. This is considered as one of the reproductive actins.</text>
</comment>
<comment type="catalytic activity">
    <reaction evidence="1">
        <text>ATP + H2O = ADP + phosphate + H(+)</text>
        <dbReference type="Rhea" id="RHEA:13065"/>
        <dbReference type="ChEBI" id="CHEBI:15377"/>
        <dbReference type="ChEBI" id="CHEBI:15378"/>
        <dbReference type="ChEBI" id="CHEBI:30616"/>
        <dbReference type="ChEBI" id="CHEBI:43474"/>
        <dbReference type="ChEBI" id="CHEBI:456216"/>
    </reaction>
</comment>
<comment type="subunit">
    <text>Polymerization of globular actin (G-actin) leads to a structural filament (F-actin) in the form of a two-stranded helix. The binding of profilin to monomeric G-actin cause the sequestration of actin into profilactin complexes, and prevents the polymerization.</text>
</comment>
<comment type="subcellular location">
    <subcellularLocation>
        <location>Cytoplasm</location>
        <location>Cytoskeleton</location>
    </subcellularLocation>
</comment>
<comment type="tissue specificity">
    <text>Preferentially expressed in young and expanding tissues, floral organ primordia, developing seeds, and emerging inflorescence. Displays a very high expression level in mature pollen and pollen tubes. Little or no reproductive-gene expression is detected in vegetative organs, such as root, stems, leaves, sepals and petals.</text>
</comment>
<comment type="developmental stage">
    <text>Significantly expressed during endosperm, ovule and embryo development.</text>
</comment>
<comment type="miscellaneous">
    <text>There are 8 actin genes in A.thaliana.</text>
</comment>
<comment type="similarity">
    <text evidence="3">Belongs to the actin family.</text>
</comment>
<keyword id="KW-0007">Acetylation</keyword>
<keyword id="KW-0067">ATP-binding</keyword>
<keyword id="KW-0963">Cytoplasm</keyword>
<keyword id="KW-0206">Cytoskeleton</keyword>
<keyword id="KW-0378">Hydrolase</keyword>
<keyword id="KW-0547">Nucleotide-binding</keyword>
<keyword id="KW-1185">Reference proteome</keyword>
<evidence type="ECO:0000250" key="1">
    <source>
        <dbReference type="UniProtKB" id="P68137"/>
    </source>
</evidence>
<evidence type="ECO:0000250" key="2">
    <source>
        <dbReference type="UniProtKB" id="Q96292"/>
    </source>
</evidence>
<evidence type="ECO:0000305" key="3"/>
<accession>P53496</accession>
<name>ACT11_ARATH</name>
<gene>
    <name type="primary">ACT11</name>
    <name type="ordered locus">At3g12110</name>
    <name type="ORF">T21B14.7</name>
    <name type="ORF">T21B14_108</name>
    <name type="ORF">T23B7.5</name>
</gene>
<reference key="1">
    <citation type="journal article" date="1997" name="Plant Mol. Biol.">
        <title>The Arabidopsis ACT11 actin gene is strongly expressed in tissues of the emerging inflorescence, pollen, and developing ovules.</title>
        <authorList>
            <person name="Huang S."/>
            <person name="An Y.-Q."/>
            <person name="McDowell J.M."/>
            <person name="McKinney E.C."/>
            <person name="Meagher R.B."/>
        </authorList>
    </citation>
    <scope>NUCLEOTIDE SEQUENCE [GENOMIC DNA]</scope>
    <source>
        <strain>cv. Columbia</strain>
    </source>
</reference>
<reference key="2">
    <citation type="journal article" date="2000" name="Nature">
        <title>Sequence and analysis of chromosome 3 of the plant Arabidopsis thaliana.</title>
        <authorList>
            <person name="Salanoubat M."/>
            <person name="Lemcke K."/>
            <person name="Rieger M."/>
            <person name="Ansorge W."/>
            <person name="Unseld M."/>
            <person name="Fartmann B."/>
            <person name="Valle G."/>
            <person name="Bloecker H."/>
            <person name="Perez-Alonso M."/>
            <person name="Obermaier B."/>
            <person name="Delseny M."/>
            <person name="Boutry M."/>
            <person name="Grivell L.A."/>
            <person name="Mache R."/>
            <person name="Puigdomenech P."/>
            <person name="De Simone V."/>
            <person name="Choisne N."/>
            <person name="Artiguenave F."/>
            <person name="Robert C."/>
            <person name="Brottier P."/>
            <person name="Wincker P."/>
            <person name="Cattolico L."/>
            <person name="Weissenbach J."/>
            <person name="Saurin W."/>
            <person name="Quetier F."/>
            <person name="Schaefer M."/>
            <person name="Mueller-Auer S."/>
            <person name="Gabel C."/>
            <person name="Fuchs M."/>
            <person name="Benes V."/>
            <person name="Wurmbach E."/>
            <person name="Drzonek H."/>
            <person name="Erfle H."/>
            <person name="Jordan N."/>
            <person name="Bangert S."/>
            <person name="Wiedelmann R."/>
            <person name="Kranz H."/>
            <person name="Voss H."/>
            <person name="Holland R."/>
            <person name="Brandt P."/>
            <person name="Nyakatura G."/>
            <person name="Vezzi A."/>
            <person name="D'Angelo M."/>
            <person name="Pallavicini A."/>
            <person name="Toppo S."/>
            <person name="Simionati B."/>
            <person name="Conrad A."/>
            <person name="Hornischer K."/>
            <person name="Kauer G."/>
            <person name="Loehnert T.-H."/>
            <person name="Nordsiek G."/>
            <person name="Reichelt J."/>
            <person name="Scharfe M."/>
            <person name="Schoen O."/>
            <person name="Bargues M."/>
            <person name="Terol J."/>
            <person name="Climent J."/>
            <person name="Navarro P."/>
            <person name="Collado C."/>
            <person name="Perez-Perez A."/>
            <person name="Ottenwaelder B."/>
            <person name="Duchemin D."/>
            <person name="Cooke R."/>
            <person name="Laudie M."/>
            <person name="Berger-Llauro C."/>
            <person name="Purnelle B."/>
            <person name="Masuy D."/>
            <person name="de Haan M."/>
            <person name="Maarse A.C."/>
            <person name="Alcaraz J.-P."/>
            <person name="Cottet A."/>
            <person name="Casacuberta E."/>
            <person name="Monfort A."/>
            <person name="Argiriou A."/>
            <person name="Flores M."/>
            <person name="Liguori R."/>
            <person name="Vitale D."/>
            <person name="Mannhaupt G."/>
            <person name="Haase D."/>
            <person name="Schoof H."/>
            <person name="Rudd S."/>
            <person name="Zaccaria P."/>
            <person name="Mewes H.-W."/>
            <person name="Mayer K.F.X."/>
            <person name="Kaul S."/>
            <person name="Town C.D."/>
            <person name="Koo H.L."/>
            <person name="Tallon L.J."/>
            <person name="Jenkins J."/>
            <person name="Rooney T."/>
            <person name="Rizzo M."/>
            <person name="Walts A."/>
            <person name="Utterback T."/>
            <person name="Fujii C.Y."/>
            <person name="Shea T.P."/>
            <person name="Creasy T.H."/>
            <person name="Haas B."/>
            <person name="Maiti R."/>
            <person name="Wu D."/>
            <person name="Peterson J."/>
            <person name="Van Aken S."/>
            <person name="Pai G."/>
            <person name="Militscher J."/>
            <person name="Sellers P."/>
            <person name="Gill J.E."/>
            <person name="Feldblyum T.V."/>
            <person name="Preuss D."/>
            <person name="Lin X."/>
            <person name="Nierman W.C."/>
            <person name="Salzberg S.L."/>
            <person name="White O."/>
            <person name="Venter J.C."/>
            <person name="Fraser C.M."/>
            <person name="Kaneko T."/>
            <person name="Nakamura Y."/>
            <person name="Sato S."/>
            <person name="Kato T."/>
            <person name="Asamizu E."/>
            <person name="Sasamoto S."/>
            <person name="Kimura T."/>
            <person name="Idesawa K."/>
            <person name="Kawashima K."/>
            <person name="Kishida Y."/>
            <person name="Kiyokawa C."/>
            <person name="Kohara M."/>
            <person name="Matsumoto M."/>
            <person name="Matsuno A."/>
            <person name="Muraki A."/>
            <person name="Nakayama S."/>
            <person name="Nakazaki N."/>
            <person name="Shinpo S."/>
            <person name="Takeuchi C."/>
            <person name="Wada T."/>
            <person name="Watanabe A."/>
            <person name="Yamada M."/>
            <person name="Yasuda M."/>
            <person name="Tabata S."/>
        </authorList>
    </citation>
    <scope>NUCLEOTIDE SEQUENCE [LARGE SCALE GENOMIC DNA]</scope>
    <source>
        <strain>cv. Columbia</strain>
    </source>
</reference>
<reference key="3">
    <citation type="journal article" date="2000" name="DNA Res.">
        <title>Structural analysis of Arabidopsis thaliana chromosome 3. II. Sequence features of the 4,251,695 bp regions covered by 90 P1, TAC and BAC clones.</title>
        <authorList>
            <person name="Kaneko T."/>
            <person name="Katoh T."/>
            <person name="Sato S."/>
            <person name="Nakamura Y."/>
            <person name="Asamizu E."/>
            <person name="Tabata S."/>
        </authorList>
    </citation>
    <scope>NUCLEOTIDE SEQUENCE [LARGE SCALE GENOMIC DNA]</scope>
    <source>
        <strain>cv. Columbia</strain>
    </source>
</reference>
<reference key="4">
    <citation type="journal article" date="2017" name="Plant J.">
        <title>Araport11: a complete reannotation of the Arabidopsis thaliana reference genome.</title>
        <authorList>
            <person name="Cheng C.Y."/>
            <person name="Krishnakumar V."/>
            <person name="Chan A.P."/>
            <person name="Thibaud-Nissen F."/>
            <person name="Schobel S."/>
            <person name="Town C.D."/>
        </authorList>
    </citation>
    <scope>GENOME REANNOTATION</scope>
    <source>
        <strain>cv. Columbia</strain>
    </source>
</reference>
<reference key="5">
    <citation type="journal article" date="2003" name="Science">
        <title>Empirical analysis of transcriptional activity in the Arabidopsis genome.</title>
        <authorList>
            <person name="Yamada K."/>
            <person name="Lim J."/>
            <person name="Dale J.M."/>
            <person name="Chen H."/>
            <person name="Shinn P."/>
            <person name="Palm C.J."/>
            <person name="Southwick A.M."/>
            <person name="Wu H.C."/>
            <person name="Kim C.J."/>
            <person name="Nguyen M."/>
            <person name="Pham P.K."/>
            <person name="Cheuk R.F."/>
            <person name="Karlin-Newmann G."/>
            <person name="Liu S.X."/>
            <person name="Lam B."/>
            <person name="Sakano H."/>
            <person name="Wu T."/>
            <person name="Yu G."/>
            <person name="Miranda M."/>
            <person name="Quach H.L."/>
            <person name="Tripp M."/>
            <person name="Chang C.H."/>
            <person name="Lee J.M."/>
            <person name="Toriumi M.J."/>
            <person name="Chan M.M."/>
            <person name="Tang C.C."/>
            <person name="Onodera C.S."/>
            <person name="Deng J.M."/>
            <person name="Akiyama K."/>
            <person name="Ansari Y."/>
            <person name="Arakawa T."/>
            <person name="Banh J."/>
            <person name="Banno F."/>
            <person name="Bowser L."/>
            <person name="Brooks S.Y."/>
            <person name="Carninci P."/>
            <person name="Chao Q."/>
            <person name="Choy N."/>
            <person name="Enju A."/>
            <person name="Goldsmith A.D."/>
            <person name="Gurjal M."/>
            <person name="Hansen N.F."/>
            <person name="Hayashizaki Y."/>
            <person name="Johnson-Hopson C."/>
            <person name="Hsuan V.W."/>
            <person name="Iida K."/>
            <person name="Karnes M."/>
            <person name="Khan S."/>
            <person name="Koesema E."/>
            <person name="Ishida J."/>
            <person name="Jiang P.X."/>
            <person name="Jones T."/>
            <person name="Kawai J."/>
            <person name="Kamiya A."/>
            <person name="Meyers C."/>
            <person name="Nakajima M."/>
            <person name="Narusaka M."/>
            <person name="Seki M."/>
            <person name="Sakurai T."/>
            <person name="Satou M."/>
            <person name="Tamse R."/>
            <person name="Vaysberg M."/>
            <person name="Wallender E.K."/>
            <person name="Wong C."/>
            <person name="Yamamura Y."/>
            <person name="Yuan S."/>
            <person name="Shinozaki K."/>
            <person name="Davis R.W."/>
            <person name="Theologis A."/>
            <person name="Ecker J.R."/>
        </authorList>
    </citation>
    <scope>NUCLEOTIDE SEQUENCE [LARGE SCALE MRNA]</scope>
    <source>
        <strain>cv. Columbia</strain>
    </source>
</reference>
<reference key="6">
    <citation type="submission" date="2002-03" db="EMBL/GenBank/DDBJ databases">
        <title>Full-length cDNA from Arabidopsis thaliana.</title>
        <authorList>
            <person name="Brover V.V."/>
            <person name="Troukhan M.E."/>
            <person name="Alexandrov N.A."/>
            <person name="Lu Y.-P."/>
            <person name="Flavell R.B."/>
            <person name="Feldmann K.A."/>
        </authorList>
    </citation>
    <scope>NUCLEOTIDE SEQUENCE [LARGE SCALE MRNA]</scope>
</reference>
<reference key="7">
    <citation type="journal article" date="1996" name="Genetics">
        <title>Structure and evolution of the actin gene family in Arabidopsis thaliana.</title>
        <authorList>
            <person name="McDowell J.M."/>
            <person name="Huang S."/>
            <person name="McKinney E.C."/>
            <person name="An Y.-Q."/>
            <person name="Meagher R.B."/>
        </authorList>
    </citation>
    <scope>GENE FAMILY ORGANIZATION</scope>
    <scope>CHARACTERIZATION</scope>
    <source>
        <strain>cv. Columbia</strain>
    </source>
</reference>